<comment type="function">
    <text evidence="1">Cell division protein that is part of the divisome complex and is recruited early to the Z-ring. Probably stimulates Z-ring formation, perhaps through the cross-linking of FtsZ protofilaments. Its function overlaps with FtsA.</text>
</comment>
<comment type="subunit">
    <text evidence="1">Homodimer. Interacts with FtsZ.</text>
</comment>
<comment type="subcellular location">
    <subcellularLocation>
        <location evidence="1">Cytoplasm</location>
    </subcellularLocation>
    <text evidence="1">Localizes to the division site, in a FtsZ-dependent manner.</text>
</comment>
<comment type="similarity">
    <text evidence="1">Belongs to the SepF family.</text>
</comment>
<comment type="sequence caution" evidence="3">
    <conflict type="erroneous initiation">
        <sequence resource="EMBL-CDS" id="AAK46490"/>
    </conflict>
</comment>
<sequence length="218" mass="25028">MSTLHKVKAYFGMAPMEDYDDEYYDDRAPSRGYARPRFDDDYGRYDGRDYDDARSDSRGDLRGEPADYPPPGYRGGYADEPRFRPREFDRAEMTRPRFGSWLRNSTRGALAMDPRRMAMMFEDGHPLSKITTLRPKDYSEARTIGERFRDGSPVIMDLVSMDNADAKRLVDFAAGLAFALRGSFDKVATKVFLLSPADVDVSPEERRRIAETGFYAYQ</sequence>
<protein>
    <recommendedName>
        <fullName evidence="1">Cell division protein SepF</fullName>
    </recommendedName>
</protein>
<accession>P9WGJ4</accession>
<accession>L0TAB8</accession>
<accession>O06229</accession>
<accession>Q7D7G2</accession>
<evidence type="ECO:0000255" key="1">
    <source>
        <dbReference type="HAMAP-Rule" id="MF_01197"/>
    </source>
</evidence>
<evidence type="ECO:0000256" key="2">
    <source>
        <dbReference type="SAM" id="MobiDB-lite"/>
    </source>
</evidence>
<evidence type="ECO:0000305" key="3"/>
<proteinExistence type="inferred from homology"/>
<dbReference type="EMBL" id="AE000516">
    <property type="protein sequence ID" value="AAK46490.1"/>
    <property type="status" value="ALT_INIT"/>
    <property type="molecule type" value="Genomic_DNA"/>
</dbReference>
<dbReference type="PIR" id="G70578">
    <property type="entry name" value="G70578"/>
</dbReference>
<dbReference type="RefSeq" id="WP_003411133.1">
    <property type="nucleotide sequence ID" value="NZ_KK341227.1"/>
</dbReference>
<dbReference type="SMR" id="P9WGJ4"/>
<dbReference type="GeneID" id="45426125"/>
<dbReference type="KEGG" id="mtc:MT2206"/>
<dbReference type="HOGENOM" id="CLU_078499_0_0_11"/>
<dbReference type="Proteomes" id="UP000001020">
    <property type="component" value="Chromosome"/>
</dbReference>
<dbReference type="GO" id="GO:0005737">
    <property type="term" value="C:cytoplasm"/>
    <property type="evidence" value="ECO:0007669"/>
    <property type="project" value="UniProtKB-SubCell"/>
</dbReference>
<dbReference type="GO" id="GO:0000917">
    <property type="term" value="P:division septum assembly"/>
    <property type="evidence" value="ECO:0007669"/>
    <property type="project" value="UniProtKB-KW"/>
</dbReference>
<dbReference type="GO" id="GO:0043093">
    <property type="term" value="P:FtsZ-dependent cytokinesis"/>
    <property type="evidence" value="ECO:0007669"/>
    <property type="project" value="UniProtKB-UniRule"/>
</dbReference>
<dbReference type="FunFam" id="3.30.110.150:FF:000001">
    <property type="entry name" value="Cell division protein SepF"/>
    <property type="match status" value="1"/>
</dbReference>
<dbReference type="Gene3D" id="3.30.110.150">
    <property type="entry name" value="SepF-like protein"/>
    <property type="match status" value="1"/>
</dbReference>
<dbReference type="HAMAP" id="MF_01197">
    <property type="entry name" value="SepF"/>
    <property type="match status" value="1"/>
</dbReference>
<dbReference type="InterPro" id="IPR023052">
    <property type="entry name" value="Cell_div_SepF"/>
</dbReference>
<dbReference type="InterPro" id="IPR007561">
    <property type="entry name" value="Cell_div_SepF/SepF-rel"/>
</dbReference>
<dbReference type="InterPro" id="IPR038594">
    <property type="entry name" value="SepF-like_sf"/>
</dbReference>
<dbReference type="PANTHER" id="PTHR35798">
    <property type="entry name" value="CELL DIVISION PROTEIN SEPF"/>
    <property type="match status" value="1"/>
</dbReference>
<dbReference type="PANTHER" id="PTHR35798:SF1">
    <property type="entry name" value="CELL DIVISION PROTEIN SEPF"/>
    <property type="match status" value="1"/>
</dbReference>
<dbReference type="Pfam" id="PF04472">
    <property type="entry name" value="SepF"/>
    <property type="match status" value="1"/>
</dbReference>
<reference key="1">
    <citation type="journal article" date="2002" name="J. Bacteriol.">
        <title>Whole-genome comparison of Mycobacterium tuberculosis clinical and laboratory strains.</title>
        <authorList>
            <person name="Fleischmann R.D."/>
            <person name="Alland D."/>
            <person name="Eisen J.A."/>
            <person name="Carpenter L."/>
            <person name="White O."/>
            <person name="Peterson J.D."/>
            <person name="DeBoy R.T."/>
            <person name="Dodson R.J."/>
            <person name="Gwinn M.L."/>
            <person name="Haft D.H."/>
            <person name="Hickey E.K."/>
            <person name="Kolonay J.F."/>
            <person name="Nelson W.C."/>
            <person name="Umayam L.A."/>
            <person name="Ermolaeva M.D."/>
            <person name="Salzberg S.L."/>
            <person name="Delcher A."/>
            <person name="Utterback T.R."/>
            <person name="Weidman J.F."/>
            <person name="Khouri H.M."/>
            <person name="Gill J."/>
            <person name="Mikula A."/>
            <person name="Bishai W."/>
            <person name="Jacobs W.R. Jr."/>
            <person name="Venter J.C."/>
            <person name="Fraser C.M."/>
        </authorList>
    </citation>
    <scope>NUCLEOTIDE SEQUENCE [LARGE SCALE GENOMIC DNA]</scope>
    <source>
        <strain>CDC 1551 / Oshkosh</strain>
    </source>
</reference>
<gene>
    <name evidence="1" type="primary">sepF</name>
    <name type="ordered locus">MT2206</name>
</gene>
<feature type="chain" id="PRO_0000428351" description="Cell division protein SepF">
    <location>
        <begin position="1"/>
        <end position="218"/>
    </location>
</feature>
<feature type="region of interest" description="Disordered" evidence="2">
    <location>
        <begin position="20"/>
        <end position="81"/>
    </location>
</feature>
<feature type="compositionally biased region" description="Basic and acidic residues" evidence="2">
    <location>
        <begin position="36"/>
        <end position="65"/>
    </location>
</feature>
<name>SEPF_MYCTO</name>
<organism>
    <name type="scientific">Mycobacterium tuberculosis (strain CDC 1551 / Oshkosh)</name>
    <dbReference type="NCBI Taxonomy" id="83331"/>
    <lineage>
        <taxon>Bacteria</taxon>
        <taxon>Bacillati</taxon>
        <taxon>Actinomycetota</taxon>
        <taxon>Actinomycetes</taxon>
        <taxon>Mycobacteriales</taxon>
        <taxon>Mycobacteriaceae</taxon>
        <taxon>Mycobacterium</taxon>
        <taxon>Mycobacterium tuberculosis complex</taxon>
    </lineage>
</organism>
<keyword id="KW-0131">Cell cycle</keyword>
<keyword id="KW-0132">Cell division</keyword>
<keyword id="KW-0963">Cytoplasm</keyword>
<keyword id="KW-1185">Reference proteome</keyword>
<keyword id="KW-0717">Septation</keyword>